<protein>
    <recommendedName>
        <fullName>DEP domain-containing protein 7</fullName>
    </recommendedName>
</protein>
<name>DEPD7_XENTR</name>
<dbReference type="EMBL" id="BC080467">
    <property type="protein sequence ID" value="AAH80467.1"/>
    <property type="molecule type" value="mRNA"/>
</dbReference>
<dbReference type="EMBL" id="BC122051">
    <property type="protein sequence ID" value="AAI22052.1"/>
    <property type="molecule type" value="mRNA"/>
</dbReference>
<dbReference type="RefSeq" id="NP_001072183.1">
    <property type="nucleotide sequence ID" value="NM_001078715.2"/>
</dbReference>
<dbReference type="SMR" id="Q0VGW0"/>
<dbReference type="FunCoup" id="Q0VGW0">
    <property type="interactions" value="151"/>
</dbReference>
<dbReference type="STRING" id="8364.ENSXETP00000007941"/>
<dbReference type="PaxDb" id="8364-ENSXETP00000038959"/>
<dbReference type="DNASU" id="779629"/>
<dbReference type="GeneID" id="779629"/>
<dbReference type="KEGG" id="xtr:779629"/>
<dbReference type="AGR" id="Xenbase:XB-GENE-1010065"/>
<dbReference type="CTD" id="91614"/>
<dbReference type="Xenbase" id="XB-GENE-1010065">
    <property type="gene designation" value="depdc7"/>
</dbReference>
<dbReference type="eggNOG" id="ENOG502QW4D">
    <property type="taxonomic scope" value="Eukaryota"/>
</dbReference>
<dbReference type="HOGENOM" id="CLU_033776_1_0_1"/>
<dbReference type="InParanoid" id="Q0VGW0"/>
<dbReference type="OrthoDB" id="276323at2759"/>
<dbReference type="TreeFam" id="TF328365"/>
<dbReference type="Proteomes" id="UP000008143">
    <property type="component" value="Chromosome 4"/>
</dbReference>
<dbReference type="Bgee" id="ENSXETG00000017967">
    <property type="expression patterns" value="Expressed in 2-cell stage embryo and 11 other cell types or tissues"/>
</dbReference>
<dbReference type="GO" id="GO:0035556">
    <property type="term" value="P:intracellular signal transduction"/>
    <property type="evidence" value="ECO:0007669"/>
    <property type="project" value="InterPro"/>
</dbReference>
<dbReference type="CDD" id="cd04446">
    <property type="entry name" value="DEP_DEPDC4"/>
    <property type="match status" value="1"/>
</dbReference>
<dbReference type="CDD" id="cd04405">
    <property type="entry name" value="RhoGAP_BRCC3-like"/>
    <property type="match status" value="1"/>
</dbReference>
<dbReference type="Gene3D" id="1.10.10.10">
    <property type="entry name" value="Winged helix-like DNA-binding domain superfamily/Winged helix DNA-binding domain"/>
    <property type="match status" value="1"/>
</dbReference>
<dbReference type="InterPro" id="IPR000591">
    <property type="entry name" value="DEP_dom"/>
</dbReference>
<dbReference type="InterPro" id="IPR036388">
    <property type="entry name" value="WH-like_DNA-bd_sf"/>
</dbReference>
<dbReference type="InterPro" id="IPR036390">
    <property type="entry name" value="WH_DNA-bd_sf"/>
</dbReference>
<dbReference type="PANTHER" id="PTHR16206">
    <property type="entry name" value="DEP DOMAIN-CONTAINING"/>
    <property type="match status" value="1"/>
</dbReference>
<dbReference type="PANTHER" id="PTHR16206:SF9">
    <property type="entry name" value="DEP DOMAIN-CONTAINING PROTEIN 7"/>
    <property type="match status" value="1"/>
</dbReference>
<dbReference type="Pfam" id="PF00610">
    <property type="entry name" value="DEP"/>
    <property type="match status" value="1"/>
</dbReference>
<dbReference type="SMART" id="SM00049">
    <property type="entry name" value="DEP"/>
    <property type="match status" value="1"/>
</dbReference>
<dbReference type="SUPFAM" id="SSF46785">
    <property type="entry name" value="Winged helix' DNA-binding domain"/>
    <property type="match status" value="1"/>
</dbReference>
<feature type="chain" id="PRO_0000307744" description="DEP domain-containing protein 7">
    <location>
        <begin position="1"/>
        <end position="520"/>
    </location>
</feature>
<feature type="domain" description="DEP">
    <location>
        <begin position="45"/>
        <end position="137"/>
    </location>
</feature>
<feature type="region of interest" description="Disordered" evidence="1">
    <location>
        <begin position="148"/>
        <end position="167"/>
    </location>
</feature>
<feature type="sequence conflict" description="In Ref. 1; AAH80467." evidence="2" ref="1">
    <original>C</original>
    <variation>W</variation>
    <location>
        <position position="153"/>
    </location>
</feature>
<feature type="sequence conflict" description="In Ref. 1; AAI22052." evidence="2" ref="1">
    <original>P</original>
    <variation>L</variation>
    <location>
        <position position="425"/>
    </location>
</feature>
<organism>
    <name type="scientific">Xenopus tropicalis</name>
    <name type="common">Western clawed frog</name>
    <name type="synonym">Silurana tropicalis</name>
    <dbReference type="NCBI Taxonomy" id="8364"/>
    <lineage>
        <taxon>Eukaryota</taxon>
        <taxon>Metazoa</taxon>
        <taxon>Chordata</taxon>
        <taxon>Craniata</taxon>
        <taxon>Vertebrata</taxon>
        <taxon>Euteleostomi</taxon>
        <taxon>Amphibia</taxon>
        <taxon>Batrachia</taxon>
        <taxon>Anura</taxon>
        <taxon>Pipoidea</taxon>
        <taxon>Pipidae</taxon>
        <taxon>Xenopodinae</taxon>
        <taxon>Xenopus</taxon>
        <taxon>Silurana</taxon>
    </lineage>
</organism>
<sequence>MATVREKAVSLNLCATYSPAQRPPGPNGSHRPFRATYIWSSIIQALTQVEVKKRRHHLKYHHDCFIGSEAVDVVFAHLVQHKYFGDTEIPRSKVVRVCQALMDCKVFEPIVTACMFGREKKRTVFEDSSCSLYRFINNSSHLGAQVEKSNGRCTPQRPKHSSFQSAPLKSPSLEDLWDNLSLTAADPTHINLTANLPPKVVGEVWQEQTIRRLLQLVDLPLLDSLLEYTPVAPRIPQVKEEELNLTSNYLDREILKAFSDAQADEWVSAAVDCLDFLPDHMVVDVSRNLPEQQAPDSKWKLLLFDTIGKHYQNRSPLLRNQLFDIHTGIAELLVNGKNEPALEATQLCLKLLDSPSREEFRRLLYFMALAADPSEFRLHEETDNRMTVKRMFSRAVVCNKNLSKGKCDLLVLFILDHHKDVFKIPGSLHKMVSDKLVAIQQGSDPDRDTGYTFCQRVDKREFDSATQNNTRTELCALLKTIYENTSLSPKEKKRLLGQFYKSHPETFIQYFGDRVSSVYT</sequence>
<accession>Q0VGW0</accession>
<accession>Q0D2A7</accession>
<proteinExistence type="evidence at transcript level"/>
<evidence type="ECO:0000256" key="1">
    <source>
        <dbReference type="SAM" id="MobiDB-lite"/>
    </source>
</evidence>
<evidence type="ECO:0000305" key="2"/>
<keyword id="KW-1185">Reference proteome</keyword>
<comment type="similarity">
    <text evidence="2">Belongs to the DEPDC7 family.</text>
</comment>
<gene>
    <name type="primary">depdc7</name>
</gene>
<reference key="1">
    <citation type="submission" date="2004-08" db="EMBL/GenBank/DDBJ databases">
        <authorList>
            <consortium name="NIH - Xenopus Gene Collection (XGC) project"/>
        </authorList>
    </citation>
    <scope>NUCLEOTIDE SEQUENCE [LARGE SCALE MRNA]</scope>
    <source>
        <tissue>Embryo</tissue>
        <tissue>Oviduct</tissue>
    </source>
</reference>